<feature type="chain" id="PRO_0000159834" description="Uncharacterized tRNA/rRNA methyltransferase MG252 homolog">
    <location>
        <begin position="1"/>
        <end position="242"/>
    </location>
</feature>
<feature type="binding site" evidence="1">
    <location>
        <position position="198"/>
    </location>
    <ligand>
        <name>S-adenosyl-L-methionine</name>
        <dbReference type="ChEBI" id="CHEBI:59789"/>
    </ligand>
</feature>
<feature type="binding site" evidence="1">
    <location>
        <position position="218"/>
    </location>
    <ligand>
        <name>S-adenosyl-L-methionine</name>
        <dbReference type="ChEBI" id="CHEBI:59789"/>
    </ligand>
</feature>
<feature type="binding site" evidence="1">
    <location>
        <position position="227"/>
    </location>
    <ligand>
        <name>S-adenosyl-L-methionine</name>
        <dbReference type="ChEBI" id="CHEBI:59789"/>
    </ligand>
</feature>
<protein>
    <recommendedName>
        <fullName>Uncharacterized tRNA/rRNA methyltransferase MG252 homolog</fullName>
        <ecNumber>2.1.1.-</ecNumber>
    </recommendedName>
</protein>
<keyword id="KW-0489">Methyltransferase</keyword>
<keyword id="KW-1185">Reference proteome</keyword>
<keyword id="KW-0808">Transferase</keyword>
<sequence length="242" mass="27775">MKRMQETSFLFGSKAFLEALDNQLQIKKVNLSDKHQKLLGLIKKRGLRYEMHSSQWFHQQFRHINHQEFVCVINPNQMLKTIEQLIQITDSKSTSTLVMLHEIQDPHNFGAILRTCMAAEVDGIIFKKHNQAPINSTVIRTSMGTVFYQNLVQVTNLSYAITTLQKHGFWTVATTLDERLKPKDYRQVDFDKRILLVGNEDKGLNALLLKNADLKVKIPMNPKLNSLNVSVAVGIILFGWKS</sequence>
<organism>
    <name type="scientific">Mycoplasma pneumoniae (strain ATCC 29342 / M129 / Subtype 1)</name>
    <name type="common">Mycoplasmoides pneumoniae</name>
    <dbReference type="NCBI Taxonomy" id="272634"/>
    <lineage>
        <taxon>Bacteria</taxon>
        <taxon>Bacillati</taxon>
        <taxon>Mycoplasmatota</taxon>
        <taxon>Mycoplasmoidales</taxon>
        <taxon>Mycoplasmoidaceae</taxon>
        <taxon>Mycoplasmoides</taxon>
    </lineage>
</organism>
<gene>
    <name type="ordered locus">MPN_355</name>
    <name type="ORF">H91_orf242a</name>
    <name type="ORF">MP481</name>
</gene>
<dbReference type="EC" id="2.1.1.-"/>
<dbReference type="EMBL" id="U00089">
    <property type="protein sequence ID" value="AAB96129.1"/>
    <property type="molecule type" value="Genomic_DNA"/>
</dbReference>
<dbReference type="PIR" id="S73807">
    <property type="entry name" value="S73807"/>
</dbReference>
<dbReference type="RefSeq" id="NP_110043.1">
    <property type="nucleotide sequence ID" value="NC_000912.1"/>
</dbReference>
<dbReference type="SMR" id="P75424"/>
<dbReference type="STRING" id="272634.MPN_355"/>
<dbReference type="EnsemblBacteria" id="AAB96129">
    <property type="protein sequence ID" value="AAB96129"/>
    <property type="gene ID" value="MPN_355"/>
</dbReference>
<dbReference type="KEGG" id="mpn:MPN_355"/>
<dbReference type="PATRIC" id="fig|272634.6.peg.382"/>
<dbReference type="HOGENOM" id="CLU_021322_0_1_14"/>
<dbReference type="OrthoDB" id="9794400at2"/>
<dbReference type="BioCyc" id="MPNE272634:G1GJ3-558-MONOMER"/>
<dbReference type="Proteomes" id="UP000000808">
    <property type="component" value="Chromosome"/>
</dbReference>
<dbReference type="GO" id="GO:0005829">
    <property type="term" value="C:cytosol"/>
    <property type="evidence" value="ECO:0007669"/>
    <property type="project" value="TreeGrafter"/>
</dbReference>
<dbReference type="GO" id="GO:0003723">
    <property type="term" value="F:RNA binding"/>
    <property type="evidence" value="ECO:0007669"/>
    <property type="project" value="InterPro"/>
</dbReference>
<dbReference type="GO" id="GO:0008173">
    <property type="term" value="F:RNA methyltransferase activity"/>
    <property type="evidence" value="ECO:0007669"/>
    <property type="project" value="InterPro"/>
</dbReference>
<dbReference type="GO" id="GO:0032259">
    <property type="term" value="P:methylation"/>
    <property type="evidence" value="ECO:0007669"/>
    <property type="project" value="UniProtKB-KW"/>
</dbReference>
<dbReference type="GO" id="GO:0006396">
    <property type="term" value="P:RNA processing"/>
    <property type="evidence" value="ECO:0007669"/>
    <property type="project" value="InterPro"/>
</dbReference>
<dbReference type="CDD" id="cd18103">
    <property type="entry name" value="SpoU-like_RlmB"/>
    <property type="match status" value="1"/>
</dbReference>
<dbReference type="Gene3D" id="3.40.1280.10">
    <property type="match status" value="1"/>
</dbReference>
<dbReference type="InterPro" id="IPR029028">
    <property type="entry name" value="Alpha/beta_knot_MTases"/>
</dbReference>
<dbReference type="InterPro" id="IPR029064">
    <property type="entry name" value="Ribosomal_eL30-like_sf"/>
</dbReference>
<dbReference type="InterPro" id="IPR004441">
    <property type="entry name" value="rRNA_MeTrfase_TrmH"/>
</dbReference>
<dbReference type="InterPro" id="IPR001537">
    <property type="entry name" value="SpoU_MeTrfase"/>
</dbReference>
<dbReference type="InterPro" id="IPR013123">
    <property type="entry name" value="SpoU_subst-bd"/>
</dbReference>
<dbReference type="InterPro" id="IPR029026">
    <property type="entry name" value="tRNA_m1G_MTases_N"/>
</dbReference>
<dbReference type="NCBIfam" id="TIGR00186">
    <property type="entry name" value="rRNA_methyl_3"/>
    <property type="match status" value="1"/>
</dbReference>
<dbReference type="PANTHER" id="PTHR46429">
    <property type="entry name" value="23S RRNA (GUANOSINE-2'-O-)-METHYLTRANSFERASE RLMB"/>
    <property type="match status" value="1"/>
</dbReference>
<dbReference type="PANTHER" id="PTHR46429:SF1">
    <property type="entry name" value="23S RRNA (GUANOSINE-2'-O-)-METHYLTRANSFERASE RLMB"/>
    <property type="match status" value="1"/>
</dbReference>
<dbReference type="Pfam" id="PF00588">
    <property type="entry name" value="SpoU_methylase"/>
    <property type="match status" value="1"/>
</dbReference>
<dbReference type="Pfam" id="PF08032">
    <property type="entry name" value="SpoU_sub_bind"/>
    <property type="match status" value="1"/>
</dbReference>
<dbReference type="SMART" id="SM00967">
    <property type="entry name" value="SpoU_sub_bind"/>
    <property type="match status" value="1"/>
</dbReference>
<dbReference type="SUPFAM" id="SSF75217">
    <property type="entry name" value="alpha/beta knot"/>
    <property type="match status" value="1"/>
</dbReference>
<dbReference type="SUPFAM" id="SSF55315">
    <property type="entry name" value="L30e-like"/>
    <property type="match status" value="1"/>
</dbReference>
<name>Y355_MYCPN</name>
<evidence type="ECO:0000250" key="1"/>
<evidence type="ECO:0000305" key="2"/>
<accession>P75424</accession>
<proteinExistence type="inferred from homology"/>
<reference key="1">
    <citation type="journal article" date="1996" name="Nucleic Acids Res.">
        <title>Complete sequence analysis of the genome of the bacterium Mycoplasma pneumoniae.</title>
        <authorList>
            <person name="Himmelreich R."/>
            <person name="Hilbert H."/>
            <person name="Plagens H."/>
            <person name="Pirkl E."/>
            <person name="Li B.-C."/>
            <person name="Herrmann R."/>
        </authorList>
    </citation>
    <scope>NUCLEOTIDE SEQUENCE [LARGE SCALE GENOMIC DNA]</scope>
    <source>
        <strain>ATCC 29342 / M129 / Subtype 1</strain>
    </source>
</reference>
<comment type="similarity">
    <text evidence="2">Belongs to the class IV-like SAM-binding methyltransferase superfamily. RNA methyltransferase TrmH family.</text>
</comment>